<keyword id="KW-0067">ATP-binding</keyword>
<keyword id="KW-0133">Cell shape</keyword>
<keyword id="KW-0961">Cell wall biogenesis/degradation</keyword>
<keyword id="KW-0963">Cytoplasm</keyword>
<keyword id="KW-0436">Ligase</keyword>
<keyword id="KW-0460">Magnesium</keyword>
<keyword id="KW-0464">Manganese</keyword>
<keyword id="KW-0479">Metal-binding</keyword>
<keyword id="KW-0547">Nucleotide-binding</keyword>
<keyword id="KW-0573">Peptidoglycan synthesis</keyword>
<keyword id="KW-1185">Reference proteome</keyword>
<proteinExistence type="inferred from homology"/>
<feature type="chain" id="PRO_1000030470" description="D-alanine--D-alanine ligase">
    <location>
        <begin position="1"/>
        <end position="373"/>
    </location>
</feature>
<feature type="domain" description="ATP-grasp" evidence="2">
    <location>
        <begin position="156"/>
        <end position="363"/>
    </location>
</feature>
<feature type="binding site" evidence="2">
    <location>
        <begin position="184"/>
        <end position="239"/>
    </location>
    <ligand>
        <name>ATP</name>
        <dbReference type="ChEBI" id="CHEBI:30616"/>
    </ligand>
</feature>
<feature type="binding site" evidence="2">
    <location>
        <position position="318"/>
    </location>
    <ligand>
        <name>Mg(2+)</name>
        <dbReference type="ChEBI" id="CHEBI:18420"/>
        <label>1</label>
    </ligand>
</feature>
<feature type="binding site" evidence="2">
    <location>
        <position position="330"/>
    </location>
    <ligand>
        <name>Mg(2+)</name>
        <dbReference type="ChEBI" id="CHEBI:18420"/>
        <label>1</label>
    </ligand>
</feature>
<feature type="binding site" evidence="2">
    <location>
        <position position="330"/>
    </location>
    <ligand>
        <name>Mg(2+)</name>
        <dbReference type="ChEBI" id="CHEBI:18420"/>
        <label>2</label>
    </ligand>
</feature>
<feature type="binding site" evidence="2">
    <location>
        <position position="332"/>
    </location>
    <ligand>
        <name>Mg(2+)</name>
        <dbReference type="ChEBI" id="CHEBI:18420"/>
        <label>2</label>
    </ligand>
</feature>
<accession>A5U6Z2</accession>
<gene>
    <name evidence="2" type="primary">ddl</name>
    <name type="ordered locus">MRA_3010</name>
</gene>
<dbReference type="EC" id="6.3.2.4" evidence="2"/>
<dbReference type="EMBL" id="CP000611">
    <property type="protein sequence ID" value="ABQ74792.1"/>
    <property type="molecule type" value="Genomic_DNA"/>
</dbReference>
<dbReference type="SMR" id="A5U6Z2"/>
<dbReference type="KEGG" id="mra:MRA_3010"/>
<dbReference type="eggNOG" id="COG1181">
    <property type="taxonomic scope" value="Bacteria"/>
</dbReference>
<dbReference type="HOGENOM" id="CLU_039268_0_1_11"/>
<dbReference type="UniPathway" id="UPA00219"/>
<dbReference type="Proteomes" id="UP000001988">
    <property type="component" value="Chromosome"/>
</dbReference>
<dbReference type="GO" id="GO:0005829">
    <property type="term" value="C:cytosol"/>
    <property type="evidence" value="ECO:0007669"/>
    <property type="project" value="TreeGrafter"/>
</dbReference>
<dbReference type="GO" id="GO:0005524">
    <property type="term" value="F:ATP binding"/>
    <property type="evidence" value="ECO:0007669"/>
    <property type="project" value="UniProtKB-KW"/>
</dbReference>
<dbReference type="GO" id="GO:0008716">
    <property type="term" value="F:D-alanine-D-alanine ligase activity"/>
    <property type="evidence" value="ECO:0007669"/>
    <property type="project" value="UniProtKB-UniRule"/>
</dbReference>
<dbReference type="GO" id="GO:0046872">
    <property type="term" value="F:metal ion binding"/>
    <property type="evidence" value="ECO:0007669"/>
    <property type="project" value="UniProtKB-KW"/>
</dbReference>
<dbReference type="GO" id="GO:0071555">
    <property type="term" value="P:cell wall organization"/>
    <property type="evidence" value="ECO:0007669"/>
    <property type="project" value="UniProtKB-KW"/>
</dbReference>
<dbReference type="GO" id="GO:0009252">
    <property type="term" value="P:peptidoglycan biosynthetic process"/>
    <property type="evidence" value="ECO:0007669"/>
    <property type="project" value="UniProtKB-UniRule"/>
</dbReference>
<dbReference type="GO" id="GO:0008360">
    <property type="term" value="P:regulation of cell shape"/>
    <property type="evidence" value="ECO:0007669"/>
    <property type="project" value="UniProtKB-KW"/>
</dbReference>
<dbReference type="FunFam" id="3.30.1490.20:FF:000039">
    <property type="entry name" value="D-alanine--D-alanine ligase"/>
    <property type="match status" value="1"/>
</dbReference>
<dbReference type="FunFam" id="3.30.470.20:FF:000008">
    <property type="entry name" value="D-alanine--D-alanine ligase"/>
    <property type="match status" value="1"/>
</dbReference>
<dbReference type="Gene3D" id="3.40.50.20">
    <property type="match status" value="1"/>
</dbReference>
<dbReference type="Gene3D" id="3.30.1490.20">
    <property type="entry name" value="ATP-grasp fold, A domain"/>
    <property type="match status" value="1"/>
</dbReference>
<dbReference type="Gene3D" id="3.30.470.20">
    <property type="entry name" value="ATP-grasp fold, B domain"/>
    <property type="match status" value="1"/>
</dbReference>
<dbReference type="HAMAP" id="MF_00047">
    <property type="entry name" value="Dala_Dala_lig"/>
    <property type="match status" value="1"/>
</dbReference>
<dbReference type="InterPro" id="IPR011761">
    <property type="entry name" value="ATP-grasp"/>
</dbReference>
<dbReference type="InterPro" id="IPR013815">
    <property type="entry name" value="ATP_grasp_subdomain_1"/>
</dbReference>
<dbReference type="InterPro" id="IPR000291">
    <property type="entry name" value="D-Ala_lig_Van_CS"/>
</dbReference>
<dbReference type="InterPro" id="IPR005905">
    <property type="entry name" value="D_ala_D_ala"/>
</dbReference>
<dbReference type="InterPro" id="IPR011095">
    <property type="entry name" value="Dala_Dala_lig_C"/>
</dbReference>
<dbReference type="InterPro" id="IPR011127">
    <property type="entry name" value="Dala_Dala_lig_N"/>
</dbReference>
<dbReference type="InterPro" id="IPR016185">
    <property type="entry name" value="PreATP-grasp_dom_sf"/>
</dbReference>
<dbReference type="NCBIfam" id="TIGR01205">
    <property type="entry name" value="D_ala_D_alaTIGR"/>
    <property type="match status" value="1"/>
</dbReference>
<dbReference type="NCBIfam" id="NF002378">
    <property type="entry name" value="PRK01372.1"/>
    <property type="match status" value="1"/>
</dbReference>
<dbReference type="NCBIfam" id="NF002528">
    <property type="entry name" value="PRK01966.1-4"/>
    <property type="match status" value="1"/>
</dbReference>
<dbReference type="PANTHER" id="PTHR23132">
    <property type="entry name" value="D-ALANINE--D-ALANINE LIGASE"/>
    <property type="match status" value="1"/>
</dbReference>
<dbReference type="PANTHER" id="PTHR23132:SF25">
    <property type="entry name" value="D-ALANINE--D-ALANINE LIGASE A"/>
    <property type="match status" value="1"/>
</dbReference>
<dbReference type="Pfam" id="PF07478">
    <property type="entry name" value="Dala_Dala_lig_C"/>
    <property type="match status" value="1"/>
</dbReference>
<dbReference type="Pfam" id="PF01820">
    <property type="entry name" value="Dala_Dala_lig_N"/>
    <property type="match status" value="1"/>
</dbReference>
<dbReference type="PIRSF" id="PIRSF039102">
    <property type="entry name" value="Ddl/VanB"/>
    <property type="match status" value="1"/>
</dbReference>
<dbReference type="SUPFAM" id="SSF56059">
    <property type="entry name" value="Glutathione synthetase ATP-binding domain-like"/>
    <property type="match status" value="1"/>
</dbReference>
<dbReference type="SUPFAM" id="SSF52440">
    <property type="entry name" value="PreATP-grasp domain"/>
    <property type="match status" value="1"/>
</dbReference>
<dbReference type="PROSITE" id="PS50975">
    <property type="entry name" value="ATP_GRASP"/>
    <property type="match status" value="1"/>
</dbReference>
<dbReference type="PROSITE" id="PS00843">
    <property type="entry name" value="DALA_DALA_LIGASE_1"/>
    <property type="match status" value="1"/>
</dbReference>
<dbReference type="PROSITE" id="PS00844">
    <property type="entry name" value="DALA_DALA_LIGASE_2"/>
    <property type="match status" value="1"/>
</dbReference>
<protein>
    <recommendedName>
        <fullName evidence="2">D-alanine--D-alanine ligase</fullName>
        <ecNumber evidence="2">6.3.2.4</ecNumber>
    </recommendedName>
    <alternativeName>
        <fullName evidence="2">D-Ala-D-Ala ligase</fullName>
    </alternativeName>
    <alternativeName>
        <fullName evidence="2">D-alanylalanine synthetase</fullName>
    </alternativeName>
</protein>
<evidence type="ECO:0000250" key="1"/>
<evidence type="ECO:0000255" key="2">
    <source>
        <dbReference type="HAMAP-Rule" id="MF_00047"/>
    </source>
</evidence>
<comment type="function">
    <text evidence="2">Cell wall formation.</text>
</comment>
<comment type="catalytic activity">
    <reaction evidence="2">
        <text>2 D-alanine + ATP = D-alanyl-D-alanine + ADP + phosphate + H(+)</text>
        <dbReference type="Rhea" id="RHEA:11224"/>
        <dbReference type="ChEBI" id="CHEBI:15378"/>
        <dbReference type="ChEBI" id="CHEBI:30616"/>
        <dbReference type="ChEBI" id="CHEBI:43474"/>
        <dbReference type="ChEBI" id="CHEBI:57416"/>
        <dbReference type="ChEBI" id="CHEBI:57822"/>
        <dbReference type="ChEBI" id="CHEBI:456216"/>
        <dbReference type="EC" id="6.3.2.4"/>
    </reaction>
</comment>
<comment type="cofactor">
    <cofactor evidence="1">
        <name>Mg(2+)</name>
        <dbReference type="ChEBI" id="CHEBI:18420"/>
    </cofactor>
    <cofactor evidence="1">
        <name>Mn(2+)</name>
        <dbReference type="ChEBI" id="CHEBI:29035"/>
    </cofactor>
    <text evidence="1">Binds 2 magnesium or manganese ions per subunit.</text>
</comment>
<comment type="pathway">
    <text evidence="2">Cell wall biogenesis; peptidoglycan biosynthesis.</text>
</comment>
<comment type="subcellular location">
    <subcellularLocation>
        <location evidence="2">Cytoplasm</location>
    </subcellularLocation>
</comment>
<comment type="similarity">
    <text evidence="2">Belongs to the D-alanine--D-alanine ligase family.</text>
</comment>
<sequence length="373" mass="39710">MSANDRRDRRVRVAVVFGGRSNEHAISCVSAGSILRNLDSRRFDVIAVGITPAGSWVLTDANPDALTITNRELPQVKSGSGTELALPADPRRGGQLVSLPPGAGEVLESVDVVFPVLHGPYGEDGTIQGLLELAGVPYVGAGVLASAVGMDKEFTKKLLAADGLPVGAYAVLRPPRSTLHRQECERLGLPVFVKPARGGSSIGVSRVSSWDQLPAAVARARRHDPKVIVEAAISGRELECGVLEMPDGTLEASTLGEIRVAGVRGREDSFYDFATKYLDDAAELDVPAKVDDQVAEAIRQLAIRAFAAIDCRGLARVDFFLTDDGPVINEINTMPGFTTISMYPRMWAASGVDYPTLLATMIETTLARGVGLH</sequence>
<organism>
    <name type="scientific">Mycobacterium tuberculosis (strain ATCC 25177 / H37Ra)</name>
    <dbReference type="NCBI Taxonomy" id="419947"/>
    <lineage>
        <taxon>Bacteria</taxon>
        <taxon>Bacillati</taxon>
        <taxon>Actinomycetota</taxon>
        <taxon>Actinomycetes</taxon>
        <taxon>Mycobacteriales</taxon>
        <taxon>Mycobacteriaceae</taxon>
        <taxon>Mycobacterium</taxon>
        <taxon>Mycobacterium tuberculosis complex</taxon>
    </lineage>
</organism>
<reference key="1">
    <citation type="journal article" date="2008" name="PLoS ONE">
        <title>Genetic basis of virulence attenuation revealed by comparative genomic analysis of Mycobacterium tuberculosis strain H37Ra versus H37Rv.</title>
        <authorList>
            <person name="Zheng H."/>
            <person name="Lu L."/>
            <person name="Wang B."/>
            <person name="Pu S."/>
            <person name="Zhang X."/>
            <person name="Zhu G."/>
            <person name="Shi W."/>
            <person name="Zhang L."/>
            <person name="Wang H."/>
            <person name="Wang S."/>
            <person name="Zhao G."/>
            <person name="Zhang Y."/>
        </authorList>
    </citation>
    <scope>NUCLEOTIDE SEQUENCE [LARGE SCALE GENOMIC DNA]</scope>
    <source>
        <strain>ATCC 25177 / H37Ra</strain>
    </source>
</reference>
<name>DDL_MYCTA</name>